<comment type="function">
    <text evidence="2">Calcium-binding protein that interacts with rotavirus cell receptors once the initial attachment by VP4 has been achieved. Rotavirus attachment and entry into the host cell probably involves multiple sequential contacts between the outer capsid proteins VP4 and VP7, and the cell receptors. Following entry into the host cell, low intracellular or intravesicular Ca(2+) concentration probably causes the calcium-stabilized VP7 trimers to dissociate from the virion. This step is probably necessary for the membrane-disrupting entry step and the release of VP4, which is locked onto the virion by VP7.</text>
</comment>
<comment type="subunit">
    <text evidence="2">Homotrimer; disulfide-linked. 2 Ca(2+) ions bound at each subunit interface in the trimer hold the trimer together. Interacts with the intermediate capsid protein VP6. Interacts with the outer capsid protein VP5*.</text>
</comment>
<comment type="subcellular location">
    <subcellularLocation>
        <location evidence="2">Virion</location>
    </subcellularLocation>
    <subcellularLocation>
        <location evidence="2">Host endoplasmic reticulum lumen</location>
    </subcellularLocation>
    <text evidence="2">The outer layer contains 780 copies of VP7, grouped as 260 trimers. Immature double-layered particles assembled in the cytoplasm bud across the membrane of the endoplasmic reticulum, acquiring during this process a transient lipid membrane that is modified with the ER resident viral glycoproteins NSP4 and VP7; these enveloped particles also contain VP4. As the particles move towards the interior of the ER cisternae, the transient lipid membrane and the non-structural protein NSP4 are lost, while the virus surface proteins VP4 and VP7 rearrange to form the outermost virus protein layer, yielding mature infectious triple-layered particles.</text>
</comment>
<comment type="alternative products">
    <event type="alternative initiation"/>
    <isoform>
        <id>Q3ZK60-1</id>
        <name>1</name>
        <sequence type="displayed"/>
    </isoform>
    <isoform>
        <id>Q3ZK60-2</id>
        <name>2</name>
        <sequence type="described" ref="VSP_038595"/>
    </isoform>
</comment>
<comment type="PTM">
    <text evidence="2">N-glycosylated.</text>
</comment>
<comment type="PTM">
    <text evidence="2">The N-terminus is blocked possibly by pyroglutamic acid.</text>
</comment>
<comment type="miscellaneous">
    <text evidence="2">Some rotavirus strains are neuraminidase-sensitive and require sialic acid to attach to the cell surface. Some rotavirus strains are integrin-dependent. Some rotavirus strains depend on ganglioside for their entry into the host cell. Hsp70 also seems to be involved in the entry of some strains.</text>
</comment>
<comment type="miscellaneous">
    <text evidence="2">In group A rotaviruses, VP7 defines the G serotype.</text>
</comment>
<comment type="miscellaneous">
    <molecule>Isoform 2</molecule>
    <text evidence="3">Produced by alternative initiation at Met-30 of isoform 1.</text>
</comment>
<comment type="similarity">
    <text evidence="2">Belongs to the rotavirus VP7 family.</text>
</comment>
<organismHost>
    <name type="scientific">Homo sapiens</name>
    <name type="common">Human</name>
    <dbReference type="NCBI Taxonomy" id="9606"/>
</organismHost>
<evidence type="ECO:0000255" key="1"/>
<evidence type="ECO:0000255" key="2">
    <source>
        <dbReference type="HAMAP-Rule" id="MF_04131"/>
    </source>
</evidence>
<evidence type="ECO:0000305" key="3"/>
<evidence type="ECO:0007829" key="4">
    <source>
        <dbReference type="PDB" id="2LM7"/>
    </source>
</evidence>
<name>VP7_ROT41</name>
<organism>
    <name type="scientific">Rotavirus A (isolate RVA/Human/Belgium/B4106/2000/G3P11[14])</name>
    <name type="common">RV-A</name>
    <name type="synonym">Rotavirus A (isolate B4106)</name>
    <dbReference type="NCBI Taxonomy" id="578843"/>
    <lineage>
        <taxon>Viruses</taxon>
        <taxon>Riboviria</taxon>
        <taxon>Orthornavirae</taxon>
        <taxon>Duplornaviricota</taxon>
        <taxon>Resentoviricetes</taxon>
        <taxon>Reovirales</taxon>
        <taxon>Sedoreoviridae</taxon>
        <taxon>Rotavirus</taxon>
        <taxon>Rotavirus A</taxon>
    </lineage>
</organism>
<reference key="1">
    <citation type="journal article" date="2006" name="J. Virol.">
        <title>Full genomic analysis of human rotavirus strain B4106 and lapine rotavirus strain 30/96 provides evidence for interspecies transmission.</title>
        <authorList>
            <person name="Matthijnssens J."/>
            <person name="Rahman M."/>
            <person name="Martella V."/>
            <person name="Xuelei Y."/>
            <person name="De Vos S."/>
            <person name="De Leener K."/>
            <person name="Ciarlet M."/>
            <person name="Buonavoglia C."/>
            <person name="Van Ranst M."/>
        </authorList>
    </citation>
    <scope>NUCLEOTIDE SEQUENCE [GENOMIC RNA]</scope>
</reference>
<protein>
    <recommendedName>
        <fullName evidence="2">Outer capsid glycoprotein VP7</fullName>
    </recommendedName>
</protein>
<proteinExistence type="evidence at protein level"/>
<accession>Q3ZK60</accession>
<dbReference type="EMBL" id="AY740736">
    <property type="protein sequence ID" value="AAU43794.1"/>
    <property type="molecule type" value="Genomic_RNA"/>
</dbReference>
<dbReference type="PDB" id="2LM7">
    <property type="method" value="NMR"/>
    <property type="chains" value="A=266-326"/>
</dbReference>
<dbReference type="PDBsum" id="2LM7"/>
<dbReference type="SMR" id="Q3ZK60"/>
<dbReference type="EvolutionaryTrace" id="Q3ZK60"/>
<dbReference type="Proteomes" id="UP000008655">
    <property type="component" value="Genome"/>
</dbReference>
<dbReference type="GO" id="GO:0044166">
    <property type="term" value="C:host cell endoplasmic reticulum lumen"/>
    <property type="evidence" value="ECO:0007669"/>
    <property type="project" value="UniProtKB-SubCell"/>
</dbReference>
<dbReference type="GO" id="GO:0039621">
    <property type="term" value="C:T=13 icosahedral viral capsid"/>
    <property type="evidence" value="ECO:0007669"/>
    <property type="project" value="UniProtKB-UniRule"/>
</dbReference>
<dbReference type="GO" id="GO:0039624">
    <property type="term" value="C:viral outer capsid"/>
    <property type="evidence" value="ECO:0007669"/>
    <property type="project" value="UniProtKB-UniRule"/>
</dbReference>
<dbReference type="GO" id="GO:0046872">
    <property type="term" value="F:metal ion binding"/>
    <property type="evidence" value="ECO:0007669"/>
    <property type="project" value="UniProtKB-KW"/>
</dbReference>
<dbReference type="FunFam" id="2.60.120.800:FF:000001">
    <property type="entry name" value="Outer capsid glycoprotein VP7"/>
    <property type="match status" value="1"/>
</dbReference>
<dbReference type="Gene3D" id="3.40.50.11130">
    <property type="entry name" value="Glycoprotein VP7, domain 1"/>
    <property type="match status" value="1"/>
</dbReference>
<dbReference type="Gene3D" id="2.60.120.800">
    <property type="entry name" value="Rotavirus outer-layer protein VP7, domain 2"/>
    <property type="match status" value="1"/>
</dbReference>
<dbReference type="HAMAP" id="MF_04130">
    <property type="entry name" value="Rota_VP7"/>
    <property type="match status" value="1"/>
</dbReference>
<dbReference type="HAMAP" id="MF_04131">
    <property type="entry name" value="Rota_VP7_A"/>
    <property type="match status" value="1"/>
</dbReference>
<dbReference type="InterPro" id="IPR001963">
    <property type="entry name" value="VP7"/>
</dbReference>
<dbReference type="InterPro" id="IPR042207">
    <property type="entry name" value="VP7_1"/>
</dbReference>
<dbReference type="InterPro" id="IPR042210">
    <property type="entry name" value="VP7_2"/>
</dbReference>
<dbReference type="Pfam" id="PF00434">
    <property type="entry name" value="VP7"/>
    <property type="match status" value="1"/>
</dbReference>
<feature type="signal peptide" evidence="2">
    <location>
        <begin position="1"/>
        <end position="50"/>
    </location>
</feature>
<feature type="chain" id="PRO_0000369100" description="Outer capsid glycoprotein VP7" evidence="2">
    <location>
        <begin position="51"/>
        <end position="326"/>
    </location>
</feature>
<feature type="region of interest" description="CNP motif; interaction with ITGAV/ITGB3" evidence="2">
    <location>
        <begin position="165"/>
        <end position="167"/>
    </location>
</feature>
<feature type="region of interest" description="LVD motif; interaction with ITGA4/ITGB1 heterodimer" evidence="2">
    <location>
        <begin position="237"/>
        <end position="239"/>
    </location>
</feature>
<feature type="region of interest" description="GPR motif; interaction with ITGAX/ITGB2" evidence="2">
    <location>
        <begin position="253"/>
        <end position="255"/>
    </location>
</feature>
<feature type="binding site" evidence="2">
    <location>
        <position position="95"/>
    </location>
    <ligand>
        <name>Ca(2+)</name>
        <dbReference type="ChEBI" id="CHEBI:29108"/>
        <label>1</label>
    </ligand>
</feature>
<feature type="binding site" evidence="2">
    <location>
        <position position="177"/>
    </location>
    <ligand>
        <name>Ca(2+)</name>
        <dbReference type="ChEBI" id="CHEBI:29108"/>
        <label>2</label>
    </ligand>
</feature>
<feature type="binding site" evidence="2">
    <location>
        <position position="206"/>
    </location>
    <ligand>
        <name>Ca(2+)</name>
        <dbReference type="ChEBI" id="CHEBI:29108"/>
        <label>1</label>
    </ligand>
</feature>
<feature type="binding site" evidence="2">
    <location>
        <position position="214"/>
    </location>
    <ligand>
        <name>Ca(2+)</name>
        <dbReference type="ChEBI" id="CHEBI:29108"/>
        <label>1</label>
    </ligand>
</feature>
<feature type="binding site" evidence="2">
    <location>
        <position position="216"/>
    </location>
    <ligand>
        <name>Ca(2+)</name>
        <dbReference type="ChEBI" id="CHEBI:29108"/>
        <label>1</label>
    </ligand>
</feature>
<feature type="binding site" evidence="2">
    <location>
        <position position="228"/>
    </location>
    <ligand>
        <name>Ca(2+)</name>
        <dbReference type="ChEBI" id="CHEBI:29108"/>
        <label>2</label>
    </ligand>
</feature>
<feature type="binding site" evidence="2">
    <location>
        <position position="229"/>
    </location>
    <ligand>
        <name>Ca(2+)</name>
        <dbReference type="ChEBI" id="CHEBI:29108"/>
        <label>2</label>
    </ligand>
</feature>
<feature type="binding site" evidence="2">
    <location>
        <position position="231"/>
    </location>
    <ligand>
        <name>Ca(2+)</name>
        <dbReference type="ChEBI" id="CHEBI:29108"/>
        <label>2</label>
    </ligand>
</feature>
<feature type="binding site" evidence="2">
    <location>
        <position position="301"/>
    </location>
    <ligand>
        <name>Ca(2+)</name>
        <dbReference type="ChEBI" id="CHEBI:29108"/>
        <label>2</label>
    </ligand>
</feature>
<feature type="glycosylation site" description="N-linked (GlcNAc...) asparagine; by host" evidence="1">
    <location>
        <position position="69"/>
    </location>
</feature>
<feature type="disulfide bond" evidence="2">
    <location>
        <begin position="82"/>
        <end position="135"/>
    </location>
</feature>
<feature type="disulfide bond" evidence="2">
    <location>
        <begin position="165"/>
        <end position="249"/>
    </location>
</feature>
<feature type="disulfide bond" evidence="2">
    <location>
        <begin position="191"/>
        <end position="244"/>
    </location>
</feature>
<feature type="disulfide bond" evidence="2">
    <location>
        <begin position="196"/>
        <end position="207"/>
    </location>
</feature>
<feature type="splice variant" id="VSP_038595" description="In isoform 2." evidence="3">
    <location>
        <begin position="1"/>
        <end position="29"/>
    </location>
</feature>
<feature type="turn" evidence="4">
    <location>
        <begin position="267"/>
        <end position="270"/>
    </location>
</feature>
<feature type="helix" evidence="4">
    <location>
        <begin position="281"/>
        <end position="312"/>
    </location>
</feature>
<feature type="strand" evidence="4">
    <location>
        <begin position="313"/>
        <end position="315"/>
    </location>
</feature>
<feature type="helix" evidence="4">
    <location>
        <begin position="317"/>
        <end position="320"/>
    </location>
</feature>
<feature type="helix" evidence="4">
    <location>
        <begin position="322"/>
        <end position="325"/>
    </location>
</feature>
<keyword id="KW-0002">3D-structure</keyword>
<keyword id="KW-0024">Alternative initiation</keyword>
<keyword id="KW-0106">Calcium</keyword>
<keyword id="KW-0167">Capsid protein</keyword>
<keyword id="KW-1015">Disulfide bond</keyword>
<keyword id="KW-0325">Glycoprotein</keyword>
<keyword id="KW-1038">Host endoplasmic reticulum</keyword>
<keyword id="KW-0945">Host-virus interaction</keyword>
<keyword id="KW-0479">Metal-binding</keyword>
<keyword id="KW-1152">Outer capsid protein</keyword>
<keyword id="KW-0732">Signal</keyword>
<keyword id="KW-1146">T=13 icosahedral capsid protein</keyword>
<keyword id="KW-0946">Virion</keyword>
<sequence>MYGIEYTTVLTFLISFILLNYILKSLTRMMDFVIYRFLFVIVVLSPLLKAQNYGINLPITGSMDTAYANSTQEETFLTSTLCLYYPTEAATEINDNSWKDTLSQLFLTKGWPTGSIYFREYTDIVSFSVDPQLYCDYNVVLMKYDAALQLDMSELADLILNEWLCNPMDITLYYYQQTDEANKWISMGSSCTIKVCPLNTQTLGIGCLTTDTATFEEVATAEKLVITDVVDGVNHKLDVTTATCTIRNCKKLGPRENVAVIQVGGSDVLDITADPTTAPQTERMMRINWKKWWQVFYTVVDYVNQIIQLMSKRSRSLNSAAFYYRV</sequence>